<comment type="function">
    <text evidence="3">Component of the cytochrome c oxidase, the last enzyme in the mitochondrial electron transport chain which drives oxidative phosphorylation. The respiratory chain contains 3 multisubunit complexes succinate dehydrogenase (complex II, CII), ubiquinol-cytochrome c oxidoreductase (cytochrome b-c1 complex, complex III, CIII) and cytochrome c oxidase (complex IV, CIV), that cooperate to transfer electrons derived from NADH and succinate to molecular oxygen, creating an electrochemical gradient over the inner membrane that drives transmembrane transport and the ATP synthase. Cytochrome c oxidase is the component of the respiratory chain that catalyzes the reduction of oxygen to water. Electrons originating from reduced cytochrome c in the intermembrane space (IMS) are transferred via the dinuclear copper A center (CU(A)) of subunit 2 and heme A of subunit 1 to the active site in subunit 1, a binuclear center (BNC) formed by heme A3 and copper B (CU(B)). The BNC reduces molecular oxygen to 2 water molecules using 4 electrons from cytochrome c in the IMS and 4 protons from the mitochondrial matrix.</text>
</comment>
<comment type="catalytic activity">
    <reaction evidence="3">
        <text>4 Fe(II)-[cytochrome c] + O2 + 8 H(+)(in) = 4 Fe(III)-[cytochrome c] + 2 H2O + 4 H(+)(out)</text>
        <dbReference type="Rhea" id="RHEA:11436"/>
        <dbReference type="Rhea" id="RHEA-COMP:10350"/>
        <dbReference type="Rhea" id="RHEA-COMP:14399"/>
        <dbReference type="ChEBI" id="CHEBI:15377"/>
        <dbReference type="ChEBI" id="CHEBI:15378"/>
        <dbReference type="ChEBI" id="CHEBI:15379"/>
        <dbReference type="ChEBI" id="CHEBI:29033"/>
        <dbReference type="ChEBI" id="CHEBI:29034"/>
        <dbReference type="EC" id="7.1.1.9"/>
    </reaction>
    <physiologicalReaction direction="left-to-right" evidence="3">
        <dbReference type="Rhea" id="RHEA:11437"/>
    </physiologicalReaction>
</comment>
<comment type="cofactor">
    <cofactor evidence="2">
        <name>heme</name>
        <dbReference type="ChEBI" id="CHEBI:30413"/>
    </cofactor>
    <text evidence="2">Binds 2 heme A groups non-covalently per subunit.</text>
</comment>
<comment type="cofactor">
    <cofactor evidence="2">
        <name>Cu cation</name>
        <dbReference type="ChEBI" id="CHEBI:23378"/>
    </cofactor>
    <text evidence="2">Binds a copper B center.</text>
</comment>
<comment type="pathway">
    <text evidence="3">Energy metabolism; oxidative phosphorylation.</text>
</comment>
<comment type="subunit">
    <text evidence="1 2">Component of the cytochrome c oxidase (complex IV, CIV), a multisubunit enzyme composed of 14 subunits. The complex is composed of a catalytic core of 3 subunits MT-CO1, MT-CO2 and MT-CO3, encoded in the mitochondrial DNA, and 11 supernumerary subunits COX4I, COX5A, COX5B, COX6A, COX6B, COX6C, COX7A, COX7B, COX7C, COX8 and NDUFA4, which are encoded in the nuclear genome. The complex exists as a monomer or a dimer and forms supercomplexes (SCs) in the inner mitochondrial membrane with NADH-ubiquinone oxidoreductase (complex I, CI) and ubiquinol-cytochrome c oxidoreductase (cytochrome b-c1 complex, complex III, CIII), resulting in different assemblies (supercomplex SCI(1)III(2)IV(1) and megacomplex MCI(2)III(2)IV(2)) (By similarity). As a newly synthesized protein, rapidly incorporates into a multi-subunit assembly intermediate in the inner membrane, called MITRAC (mitochondrial translation regulation assembly intermediate of cytochrome c oxidase) complex, whose core components are COA3/MITRAC12 and COX14. Within the MITRAC complex, interacts with COA3 and with SMIM20/MITRAC7; the interaction with SMIM20 stabilizes the newly synthesized MT-CO1 and prevents its premature turnover. Interacts with TMEM177 in a COX20-dependent manner (By similarity).</text>
</comment>
<comment type="subcellular location">
    <subcellularLocation>
        <location evidence="2">Mitochondrion inner membrane</location>
        <topology evidence="2">Multi-pass membrane protein</topology>
    </subcellularLocation>
</comment>
<comment type="similarity">
    <text evidence="4">Belongs to the heme-copper respiratory oxidase family.</text>
</comment>
<proteinExistence type="inferred from homology"/>
<accession>P48659</accession>
<organism>
    <name type="scientific">Equus caballus</name>
    <name type="common">Horse</name>
    <dbReference type="NCBI Taxonomy" id="9796"/>
    <lineage>
        <taxon>Eukaryota</taxon>
        <taxon>Metazoa</taxon>
        <taxon>Chordata</taxon>
        <taxon>Craniata</taxon>
        <taxon>Vertebrata</taxon>
        <taxon>Euteleostomi</taxon>
        <taxon>Mammalia</taxon>
        <taxon>Eutheria</taxon>
        <taxon>Laurasiatheria</taxon>
        <taxon>Perissodactyla</taxon>
        <taxon>Equidae</taxon>
        <taxon>Equus</taxon>
    </lineage>
</organism>
<geneLocation type="mitochondrion"/>
<protein>
    <recommendedName>
        <fullName>Cytochrome c oxidase subunit 1</fullName>
        <ecNumber>7.1.1.9</ecNumber>
    </recommendedName>
    <alternativeName>
        <fullName>Cytochrome c oxidase polypeptide I</fullName>
    </alternativeName>
</protein>
<gene>
    <name type="primary">MT-CO1</name>
    <name type="synonym">COI</name>
    <name type="synonym">COXI</name>
    <name type="synonym">MTCO1</name>
</gene>
<name>COX1_HORSE</name>
<keyword id="KW-0106">Calcium</keyword>
<keyword id="KW-0186">Copper</keyword>
<keyword id="KW-0249">Electron transport</keyword>
<keyword id="KW-0349">Heme</keyword>
<keyword id="KW-0408">Iron</keyword>
<keyword id="KW-0460">Magnesium</keyword>
<keyword id="KW-0472">Membrane</keyword>
<keyword id="KW-0479">Metal-binding</keyword>
<keyword id="KW-0496">Mitochondrion</keyword>
<keyword id="KW-0999">Mitochondrion inner membrane</keyword>
<keyword id="KW-1185">Reference proteome</keyword>
<keyword id="KW-0679">Respiratory chain</keyword>
<keyword id="KW-0915">Sodium</keyword>
<keyword id="KW-1278">Translocase</keyword>
<keyword id="KW-0812">Transmembrane</keyword>
<keyword id="KW-1133">Transmembrane helix</keyword>
<keyword id="KW-0813">Transport</keyword>
<sequence length="514" mass="57032">MFINRWLFSTNHKDIGTLYLLFGAWAGMVGTALSLLIRAELGQPGTLLGDDQIYNVIVTAHAFVMIFFMVMPIMIGGFGNWLVPLMIGAPDMAFPRMNNMSFWLLPPSFLLLLASSMIEAGAGTGWTVYPPLAGNLAHAGASVDLTIFSLHLAGVSSILGAINFITTIINMKPPALSQYQTPLFVWSVLITAVLLLLALPVLAAGITMLLTDRNLNTTFFDPAGGGDPILYQHLFWFFGHPEVYILILPGFGMISHIVTYYSGKKEPFGYMGMVWAMMSIGFLGFIVWAHHMFTVGMDVDTRAYFTSATMIIAIPTGVKVFSWLATLHGGNIKWSPAMLWALGFIFLFTVGGLTGIVLANSSLDIVLHDTYYVVAHFHYVLSMGAVFAIMGGFVHWFPLFSGYTLNQTWAKIHFTIMFVGVNMTFFPQHFLGLSGMPRRYSDYPDAYTTWNTISSMGSFISLTAVMLMIFMIWEAFASKREVSTVELTSTNLEWLHGCPPPYHTFEEPTYVNLK</sequence>
<evidence type="ECO:0000250" key="1">
    <source>
        <dbReference type="UniProtKB" id="P00395"/>
    </source>
</evidence>
<evidence type="ECO:0000250" key="2">
    <source>
        <dbReference type="UniProtKB" id="P00396"/>
    </source>
</evidence>
<evidence type="ECO:0000250" key="3">
    <source>
        <dbReference type="UniProtKB" id="P00401"/>
    </source>
</evidence>
<evidence type="ECO:0000305" key="4"/>
<evidence type="ECO:0000312" key="5">
    <source>
        <dbReference type="Proteomes" id="UP000002281"/>
    </source>
</evidence>
<dbReference type="EC" id="7.1.1.9"/>
<dbReference type="EMBL" id="X79547">
    <property type="protein sequence ID" value="CAA56081.1"/>
    <property type="molecule type" value="Genomic_DNA"/>
</dbReference>
<dbReference type="EMBL" id="X64305">
    <property type="protein sequence ID" value="CAA45592.1"/>
    <property type="molecule type" value="Genomic_DNA"/>
</dbReference>
<dbReference type="PIR" id="T11859">
    <property type="entry name" value="T11859"/>
</dbReference>
<dbReference type="RefSeq" id="NP_007162.1">
    <property type="nucleotide sequence ID" value="NC_001640.1"/>
</dbReference>
<dbReference type="SMR" id="P48659"/>
<dbReference type="FunCoup" id="P48659">
    <property type="interactions" value="135"/>
</dbReference>
<dbReference type="STRING" id="9796.ENSECAP00000023107"/>
<dbReference type="PaxDb" id="9796-ENSECAP00000023107"/>
<dbReference type="Ensembl" id="ENSECAT00000029861.1">
    <property type="protein sequence ID" value="ENSECAP00000023107.1"/>
    <property type="gene ID" value="ENSECAG00000027689.1"/>
</dbReference>
<dbReference type="KEGG" id="ecb:807850"/>
<dbReference type="VGNC" id="VGNC:59015">
    <property type="gene designation" value="MT-CO1"/>
</dbReference>
<dbReference type="GeneTree" id="ENSGT00390000001518"/>
<dbReference type="HOGENOM" id="CLU_011899_7_3_1"/>
<dbReference type="InParanoid" id="P48659"/>
<dbReference type="OMA" id="WAMMSIG"/>
<dbReference type="OrthoDB" id="10002679at2759"/>
<dbReference type="UniPathway" id="UPA00705"/>
<dbReference type="Proteomes" id="UP000002281">
    <property type="component" value="Mitochondrion"/>
</dbReference>
<dbReference type="Bgee" id="ENSECAG00000027689">
    <property type="expression patterns" value="Expressed in retina and 23 other cell types or tissues"/>
</dbReference>
<dbReference type="GO" id="GO:0005743">
    <property type="term" value="C:mitochondrial inner membrane"/>
    <property type="evidence" value="ECO:0007669"/>
    <property type="project" value="UniProtKB-SubCell"/>
</dbReference>
<dbReference type="GO" id="GO:0045277">
    <property type="term" value="C:respiratory chain complex IV"/>
    <property type="evidence" value="ECO:0000250"/>
    <property type="project" value="UniProtKB"/>
</dbReference>
<dbReference type="GO" id="GO:0004129">
    <property type="term" value="F:cytochrome-c oxidase activity"/>
    <property type="evidence" value="ECO:0007669"/>
    <property type="project" value="UniProtKB-EC"/>
</dbReference>
<dbReference type="GO" id="GO:0020037">
    <property type="term" value="F:heme binding"/>
    <property type="evidence" value="ECO:0007669"/>
    <property type="project" value="InterPro"/>
</dbReference>
<dbReference type="GO" id="GO:0046872">
    <property type="term" value="F:metal ion binding"/>
    <property type="evidence" value="ECO:0007669"/>
    <property type="project" value="UniProtKB-KW"/>
</dbReference>
<dbReference type="GO" id="GO:0009060">
    <property type="term" value="P:aerobic respiration"/>
    <property type="evidence" value="ECO:0000318"/>
    <property type="project" value="GO_Central"/>
</dbReference>
<dbReference type="GO" id="GO:0006119">
    <property type="term" value="P:oxidative phosphorylation"/>
    <property type="evidence" value="ECO:0007669"/>
    <property type="project" value="UniProtKB-UniPathway"/>
</dbReference>
<dbReference type="GO" id="GO:0022904">
    <property type="term" value="P:respiratory electron transport chain"/>
    <property type="evidence" value="ECO:0000318"/>
    <property type="project" value="GO_Central"/>
</dbReference>
<dbReference type="CDD" id="cd01663">
    <property type="entry name" value="Cyt_c_Oxidase_I"/>
    <property type="match status" value="1"/>
</dbReference>
<dbReference type="FunFam" id="1.20.210.10:FF:000001">
    <property type="entry name" value="Cytochrome c oxidase subunit 1"/>
    <property type="match status" value="1"/>
</dbReference>
<dbReference type="Gene3D" id="1.20.210.10">
    <property type="entry name" value="Cytochrome c oxidase-like, subunit I domain"/>
    <property type="match status" value="1"/>
</dbReference>
<dbReference type="InterPro" id="IPR023616">
    <property type="entry name" value="Cyt_c_oxase-like_su1_dom"/>
</dbReference>
<dbReference type="InterPro" id="IPR036927">
    <property type="entry name" value="Cyt_c_oxase-like_su1_sf"/>
</dbReference>
<dbReference type="InterPro" id="IPR000883">
    <property type="entry name" value="Cyt_C_Oxase_1"/>
</dbReference>
<dbReference type="InterPro" id="IPR023615">
    <property type="entry name" value="Cyt_c_Oxase_su1_BS"/>
</dbReference>
<dbReference type="InterPro" id="IPR033944">
    <property type="entry name" value="Cyt_c_oxase_su1_dom"/>
</dbReference>
<dbReference type="PANTHER" id="PTHR10422">
    <property type="entry name" value="CYTOCHROME C OXIDASE SUBUNIT 1"/>
    <property type="match status" value="1"/>
</dbReference>
<dbReference type="PANTHER" id="PTHR10422:SF18">
    <property type="entry name" value="CYTOCHROME C OXIDASE SUBUNIT 1"/>
    <property type="match status" value="1"/>
</dbReference>
<dbReference type="Pfam" id="PF00115">
    <property type="entry name" value="COX1"/>
    <property type="match status" value="1"/>
</dbReference>
<dbReference type="PRINTS" id="PR01165">
    <property type="entry name" value="CYCOXIDASEI"/>
</dbReference>
<dbReference type="SUPFAM" id="SSF81442">
    <property type="entry name" value="Cytochrome c oxidase subunit I-like"/>
    <property type="match status" value="1"/>
</dbReference>
<dbReference type="PROSITE" id="PS50855">
    <property type="entry name" value="COX1"/>
    <property type="match status" value="1"/>
</dbReference>
<dbReference type="PROSITE" id="PS00077">
    <property type="entry name" value="COX1_CUB"/>
    <property type="match status" value="1"/>
</dbReference>
<reference key="1">
    <citation type="journal article" date="1994" name="Gene">
        <title>The complete mitochondrial DNA sequence of the horse, Equus caballus: extensive heteroplasmy of the control region.</title>
        <authorList>
            <person name="Xu X."/>
            <person name="Arnason U."/>
        </authorList>
    </citation>
    <scope>NUCLEOTIDE SEQUENCE [LARGE SCALE GENOMIC DNA]</scope>
    <source>
        <strain evidence="5">Thoroughbred</strain>
    </source>
</reference>
<reference key="2">
    <citation type="journal article" date="1987" name="J. Mol. Evol.">
        <title>Mitochondrial DNA of the extinct quagga: relatedness and extent of postmortem change.</title>
        <authorList>
            <person name="Higuchi R.G."/>
            <person name="Wrischnik L.A."/>
            <person name="Oakes E."/>
            <person name="George M."/>
            <person name="Tong B."/>
            <person name="Wilson A.C."/>
        </authorList>
    </citation>
    <scope>NUCLEOTIDE SEQUENCE [GENOMIC DNA] OF 391-427</scope>
</reference>
<feature type="chain" id="PRO_0000183344" description="Cytochrome c oxidase subunit 1">
    <location>
        <begin position="1"/>
        <end position="514"/>
    </location>
</feature>
<feature type="topological domain" description="Mitochondrial matrix" evidence="2">
    <location>
        <begin position="1"/>
        <end position="11"/>
    </location>
</feature>
<feature type="transmembrane region" description="Helical; Name=I" evidence="2">
    <location>
        <begin position="12"/>
        <end position="40"/>
    </location>
</feature>
<feature type="topological domain" description="Mitochondrial intermembrane" evidence="2">
    <location>
        <begin position="41"/>
        <end position="50"/>
    </location>
</feature>
<feature type="transmembrane region" description="Helical; Name=II" evidence="2">
    <location>
        <begin position="51"/>
        <end position="86"/>
    </location>
</feature>
<feature type="topological domain" description="Mitochondrial matrix" evidence="2">
    <location>
        <begin position="87"/>
        <end position="94"/>
    </location>
</feature>
<feature type="transmembrane region" description="Helical; Name=III" evidence="2">
    <location>
        <begin position="95"/>
        <end position="117"/>
    </location>
</feature>
<feature type="topological domain" description="Mitochondrial intermembrane" evidence="2">
    <location>
        <begin position="118"/>
        <end position="140"/>
    </location>
</feature>
<feature type="transmembrane region" description="Helical; Name=IV" evidence="2">
    <location>
        <begin position="141"/>
        <end position="170"/>
    </location>
</feature>
<feature type="topological domain" description="Mitochondrial matrix" evidence="2">
    <location>
        <begin position="171"/>
        <end position="182"/>
    </location>
</feature>
<feature type="transmembrane region" description="Helical; Name=V" evidence="2">
    <location>
        <begin position="183"/>
        <end position="212"/>
    </location>
</feature>
<feature type="topological domain" description="Mitochondrial intermembrane" evidence="2">
    <location>
        <begin position="213"/>
        <end position="227"/>
    </location>
</feature>
<feature type="transmembrane region" description="Helical; Name=VI" evidence="2">
    <location>
        <begin position="228"/>
        <end position="261"/>
    </location>
</feature>
<feature type="topological domain" description="Mitochondrial matrix" evidence="2">
    <location>
        <begin position="262"/>
        <end position="269"/>
    </location>
</feature>
<feature type="transmembrane region" description="Helical; Name=VII" evidence="2">
    <location>
        <begin position="270"/>
        <end position="286"/>
    </location>
</feature>
<feature type="topological domain" description="Mitochondrial intermembrane" evidence="2">
    <location>
        <begin position="287"/>
        <end position="298"/>
    </location>
</feature>
<feature type="transmembrane region" description="Helical; Name=VIII" evidence="2">
    <location>
        <begin position="299"/>
        <end position="327"/>
    </location>
</feature>
<feature type="topological domain" description="Mitochondrial matrix" evidence="2">
    <location>
        <begin position="328"/>
        <end position="335"/>
    </location>
</feature>
<feature type="transmembrane region" description="Helical; Name=IX" evidence="2">
    <location>
        <begin position="336"/>
        <end position="357"/>
    </location>
</feature>
<feature type="topological domain" description="Mitochondrial intermembrane" evidence="2">
    <location>
        <begin position="358"/>
        <end position="370"/>
    </location>
</feature>
<feature type="transmembrane region" description="Helical; Name=X" evidence="2">
    <location>
        <begin position="371"/>
        <end position="400"/>
    </location>
</feature>
<feature type="topological domain" description="Mitochondrial matrix" evidence="2">
    <location>
        <begin position="401"/>
        <end position="406"/>
    </location>
</feature>
<feature type="transmembrane region" description="Helical; Name=XI" evidence="2">
    <location>
        <begin position="407"/>
        <end position="433"/>
    </location>
</feature>
<feature type="topological domain" description="Mitochondrial intermembrane" evidence="2">
    <location>
        <begin position="434"/>
        <end position="446"/>
    </location>
</feature>
<feature type="transmembrane region" description="Helical; Name=XII" evidence="2">
    <location>
        <begin position="447"/>
        <end position="478"/>
    </location>
</feature>
<feature type="topological domain" description="Mitochondrial matrix" evidence="2">
    <location>
        <begin position="479"/>
        <end position="514"/>
    </location>
</feature>
<feature type="binding site" evidence="2">
    <location>
        <position position="40"/>
    </location>
    <ligand>
        <name>Na(+)</name>
        <dbReference type="ChEBI" id="CHEBI:29101"/>
    </ligand>
</feature>
<feature type="binding site" evidence="2">
    <location>
        <position position="45"/>
    </location>
    <ligand>
        <name>Na(+)</name>
        <dbReference type="ChEBI" id="CHEBI:29101"/>
    </ligand>
</feature>
<feature type="binding site" description="axial binding residue" evidence="2">
    <location>
        <position position="61"/>
    </location>
    <ligand>
        <name>Fe(II)-heme a</name>
        <dbReference type="ChEBI" id="CHEBI:61715"/>
        <note>low-spin</note>
    </ligand>
    <ligandPart>
        <name>Fe</name>
        <dbReference type="ChEBI" id="CHEBI:18248"/>
    </ligandPart>
</feature>
<feature type="binding site" evidence="2">
    <location>
        <position position="240"/>
    </location>
    <ligand>
        <name>Cu cation</name>
        <dbReference type="ChEBI" id="CHEBI:23378"/>
        <label>B</label>
    </ligand>
</feature>
<feature type="binding site" evidence="2">
    <location>
        <position position="244"/>
    </location>
    <ligand>
        <name>O2</name>
        <dbReference type="ChEBI" id="CHEBI:15379"/>
    </ligand>
</feature>
<feature type="binding site" evidence="2">
    <location>
        <position position="290"/>
    </location>
    <ligand>
        <name>Cu cation</name>
        <dbReference type="ChEBI" id="CHEBI:23378"/>
        <label>B</label>
    </ligand>
</feature>
<feature type="binding site" evidence="2">
    <location>
        <position position="291"/>
    </location>
    <ligand>
        <name>Cu cation</name>
        <dbReference type="ChEBI" id="CHEBI:23378"/>
        <label>B</label>
    </ligand>
</feature>
<feature type="binding site" evidence="2">
    <location>
        <position position="368"/>
    </location>
    <ligand>
        <name>Mg(2+)</name>
        <dbReference type="ChEBI" id="CHEBI:18420"/>
        <note>ligand shared with MT-CO2</note>
    </ligand>
</feature>
<feature type="binding site" evidence="2">
    <location>
        <position position="369"/>
    </location>
    <ligand>
        <name>Mg(2+)</name>
        <dbReference type="ChEBI" id="CHEBI:18420"/>
        <note>ligand shared with MT-CO2</note>
    </ligand>
</feature>
<feature type="binding site" description="axial binding residue" evidence="2">
    <location>
        <position position="376"/>
    </location>
    <ligand>
        <name>heme a3</name>
        <dbReference type="ChEBI" id="CHEBI:83282"/>
        <note>high-spin</note>
    </ligand>
    <ligandPart>
        <name>Fe</name>
        <dbReference type="ChEBI" id="CHEBI:18248"/>
    </ligandPart>
</feature>
<feature type="binding site" description="axial binding residue" evidence="2">
    <location>
        <position position="378"/>
    </location>
    <ligand>
        <name>Fe(II)-heme a</name>
        <dbReference type="ChEBI" id="CHEBI:61715"/>
        <note>low-spin</note>
    </ligand>
    <ligandPart>
        <name>Fe</name>
        <dbReference type="ChEBI" id="CHEBI:18248"/>
    </ligandPart>
</feature>
<feature type="binding site" evidence="2">
    <location>
        <position position="441"/>
    </location>
    <ligand>
        <name>Na(+)</name>
        <dbReference type="ChEBI" id="CHEBI:29101"/>
    </ligand>
</feature>
<feature type="cross-link" description="1'-histidyl-3'-tyrosine (His-Tyr)" evidence="2">
    <location>
        <begin position="240"/>
        <end position="244"/>
    </location>
</feature>